<gene>
    <name evidence="1" type="primary">rsmA</name>
    <name evidence="1" type="synonym">ksgA</name>
    <name type="ordered locus">Rmet_0439</name>
</gene>
<evidence type="ECO:0000255" key="1">
    <source>
        <dbReference type="HAMAP-Rule" id="MF_00607"/>
    </source>
</evidence>
<sequence>MRSNVHQGHVARKRFGQNFLVDDGIIHGIVSAIDPQPNDIVVEIGPGLGALTDPLLERLPGMQVVELDRDLVERLRRRYGDRLVVHAGDALAFDFGKLREPGRALRIVGNLPYNISSPLLFHLVDFADDVRDQHFMLQKEVVERMVADPGSKSYGRLSIMLQVRYHMEHVLDVPPASFNPPPKVDSAVVRMIPWPRAEDGTLRSPYAACDAGVLGDVVTAAFSQRRKVLRNTLSFLRDQVDFDALGFDLTRRAEEVPVAEYVELARIVGGAEPPARVA</sequence>
<proteinExistence type="inferred from homology"/>
<organism>
    <name type="scientific">Cupriavidus metallidurans (strain ATCC 43123 / DSM 2839 / NBRC 102507 / CH34)</name>
    <name type="common">Ralstonia metallidurans</name>
    <dbReference type="NCBI Taxonomy" id="266264"/>
    <lineage>
        <taxon>Bacteria</taxon>
        <taxon>Pseudomonadati</taxon>
        <taxon>Pseudomonadota</taxon>
        <taxon>Betaproteobacteria</taxon>
        <taxon>Burkholderiales</taxon>
        <taxon>Burkholderiaceae</taxon>
        <taxon>Cupriavidus</taxon>
    </lineage>
</organism>
<dbReference type="EC" id="2.1.1.182" evidence="1"/>
<dbReference type="EMBL" id="CP000352">
    <property type="protein sequence ID" value="ABF07325.1"/>
    <property type="molecule type" value="Genomic_DNA"/>
</dbReference>
<dbReference type="RefSeq" id="WP_011515313.1">
    <property type="nucleotide sequence ID" value="NC_007973.1"/>
</dbReference>
<dbReference type="SMR" id="Q1LRA1"/>
<dbReference type="STRING" id="266264.Rmet_0439"/>
<dbReference type="KEGG" id="rme:Rmet_0439"/>
<dbReference type="eggNOG" id="COG0030">
    <property type="taxonomic scope" value="Bacteria"/>
</dbReference>
<dbReference type="HOGENOM" id="CLU_041220_0_1_4"/>
<dbReference type="Proteomes" id="UP000002429">
    <property type="component" value="Chromosome"/>
</dbReference>
<dbReference type="GO" id="GO:0005829">
    <property type="term" value="C:cytosol"/>
    <property type="evidence" value="ECO:0007669"/>
    <property type="project" value="TreeGrafter"/>
</dbReference>
<dbReference type="GO" id="GO:0052908">
    <property type="term" value="F:16S rRNA (adenine(1518)-N(6)/adenine(1519)-N(6))-dimethyltransferase activity"/>
    <property type="evidence" value="ECO:0007669"/>
    <property type="project" value="UniProtKB-EC"/>
</dbReference>
<dbReference type="GO" id="GO:0003723">
    <property type="term" value="F:RNA binding"/>
    <property type="evidence" value="ECO:0007669"/>
    <property type="project" value="UniProtKB-KW"/>
</dbReference>
<dbReference type="FunFam" id="1.10.8.100:FF:000001">
    <property type="entry name" value="Ribosomal RNA small subunit methyltransferase A"/>
    <property type="match status" value="1"/>
</dbReference>
<dbReference type="Gene3D" id="1.10.8.100">
    <property type="entry name" value="Ribosomal RNA adenine dimethylase-like, domain 2"/>
    <property type="match status" value="1"/>
</dbReference>
<dbReference type="Gene3D" id="3.40.50.150">
    <property type="entry name" value="Vaccinia Virus protein VP39"/>
    <property type="match status" value="1"/>
</dbReference>
<dbReference type="HAMAP" id="MF_00607">
    <property type="entry name" value="16SrRNA_methyltr_A"/>
    <property type="match status" value="1"/>
</dbReference>
<dbReference type="InterPro" id="IPR001737">
    <property type="entry name" value="KsgA/Erm"/>
</dbReference>
<dbReference type="InterPro" id="IPR023165">
    <property type="entry name" value="rRNA_Ade_diMease-like_C"/>
</dbReference>
<dbReference type="InterPro" id="IPR020596">
    <property type="entry name" value="rRNA_Ade_Mease_Trfase_CS"/>
</dbReference>
<dbReference type="InterPro" id="IPR020598">
    <property type="entry name" value="rRNA_Ade_methylase_Trfase_N"/>
</dbReference>
<dbReference type="InterPro" id="IPR011530">
    <property type="entry name" value="rRNA_adenine_dimethylase"/>
</dbReference>
<dbReference type="InterPro" id="IPR029063">
    <property type="entry name" value="SAM-dependent_MTases_sf"/>
</dbReference>
<dbReference type="NCBIfam" id="TIGR00755">
    <property type="entry name" value="ksgA"/>
    <property type="match status" value="1"/>
</dbReference>
<dbReference type="PANTHER" id="PTHR11727">
    <property type="entry name" value="DIMETHYLADENOSINE TRANSFERASE"/>
    <property type="match status" value="1"/>
</dbReference>
<dbReference type="PANTHER" id="PTHR11727:SF7">
    <property type="entry name" value="DIMETHYLADENOSINE TRANSFERASE-RELATED"/>
    <property type="match status" value="1"/>
</dbReference>
<dbReference type="Pfam" id="PF00398">
    <property type="entry name" value="RrnaAD"/>
    <property type="match status" value="1"/>
</dbReference>
<dbReference type="SMART" id="SM00650">
    <property type="entry name" value="rADc"/>
    <property type="match status" value="1"/>
</dbReference>
<dbReference type="SUPFAM" id="SSF53335">
    <property type="entry name" value="S-adenosyl-L-methionine-dependent methyltransferases"/>
    <property type="match status" value="1"/>
</dbReference>
<dbReference type="PROSITE" id="PS01131">
    <property type="entry name" value="RRNA_A_DIMETH"/>
    <property type="match status" value="1"/>
</dbReference>
<dbReference type="PROSITE" id="PS51689">
    <property type="entry name" value="SAM_RNA_A_N6_MT"/>
    <property type="match status" value="1"/>
</dbReference>
<comment type="function">
    <text evidence="1">Specifically dimethylates two adjacent adenosines (A1518 and A1519) in the loop of a conserved hairpin near the 3'-end of 16S rRNA in the 30S particle. May play a critical role in biogenesis of 30S subunits.</text>
</comment>
<comment type="catalytic activity">
    <reaction evidence="1">
        <text>adenosine(1518)/adenosine(1519) in 16S rRNA + 4 S-adenosyl-L-methionine = N(6)-dimethyladenosine(1518)/N(6)-dimethyladenosine(1519) in 16S rRNA + 4 S-adenosyl-L-homocysteine + 4 H(+)</text>
        <dbReference type="Rhea" id="RHEA:19609"/>
        <dbReference type="Rhea" id="RHEA-COMP:10232"/>
        <dbReference type="Rhea" id="RHEA-COMP:10233"/>
        <dbReference type="ChEBI" id="CHEBI:15378"/>
        <dbReference type="ChEBI" id="CHEBI:57856"/>
        <dbReference type="ChEBI" id="CHEBI:59789"/>
        <dbReference type="ChEBI" id="CHEBI:74411"/>
        <dbReference type="ChEBI" id="CHEBI:74493"/>
        <dbReference type="EC" id="2.1.1.182"/>
    </reaction>
</comment>
<comment type="subcellular location">
    <subcellularLocation>
        <location evidence="1">Cytoplasm</location>
    </subcellularLocation>
</comment>
<comment type="similarity">
    <text evidence="1">Belongs to the class I-like SAM-binding methyltransferase superfamily. rRNA adenine N(6)-methyltransferase family. RsmA subfamily.</text>
</comment>
<accession>Q1LRA1</accession>
<keyword id="KW-0963">Cytoplasm</keyword>
<keyword id="KW-0489">Methyltransferase</keyword>
<keyword id="KW-1185">Reference proteome</keyword>
<keyword id="KW-0694">RNA-binding</keyword>
<keyword id="KW-0698">rRNA processing</keyword>
<keyword id="KW-0949">S-adenosyl-L-methionine</keyword>
<keyword id="KW-0808">Transferase</keyword>
<feature type="chain" id="PRO_0000257329" description="Ribosomal RNA small subunit methyltransferase A">
    <location>
        <begin position="1"/>
        <end position="278"/>
    </location>
</feature>
<feature type="binding site" evidence="1">
    <location>
        <position position="18"/>
    </location>
    <ligand>
        <name>S-adenosyl-L-methionine</name>
        <dbReference type="ChEBI" id="CHEBI:59789"/>
    </ligand>
</feature>
<feature type="binding site" evidence="1">
    <location>
        <position position="20"/>
    </location>
    <ligand>
        <name>S-adenosyl-L-methionine</name>
        <dbReference type="ChEBI" id="CHEBI:59789"/>
    </ligand>
</feature>
<feature type="binding site" evidence="1">
    <location>
        <position position="45"/>
    </location>
    <ligand>
        <name>S-adenosyl-L-methionine</name>
        <dbReference type="ChEBI" id="CHEBI:59789"/>
    </ligand>
</feature>
<feature type="binding site" evidence="1">
    <location>
        <position position="66"/>
    </location>
    <ligand>
        <name>S-adenosyl-L-methionine</name>
        <dbReference type="ChEBI" id="CHEBI:59789"/>
    </ligand>
</feature>
<feature type="binding site" evidence="1">
    <location>
        <position position="89"/>
    </location>
    <ligand>
        <name>S-adenosyl-L-methionine</name>
        <dbReference type="ChEBI" id="CHEBI:59789"/>
    </ligand>
</feature>
<feature type="binding site" evidence="1">
    <location>
        <position position="110"/>
    </location>
    <ligand>
        <name>S-adenosyl-L-methionine</name>
        <dbReference type="ChEBI" id="CHEBI:59789"/>
    </ligand>
</feature>
<reference key="1">
    <citation type="journal article" date="2010" name="PLoS ONE">
        <title>The complete genome sequence of Cupriavidus metallidurans strain CH34, a master survivalist in harsh and anthropogenic environments.</title>
        <authorList>
            <person name="Janssen P.J."/>
            <person name="Van Houdt R."/>
            <person name="Moors H."/>
            <person name="Monsieurs P."/>
            <person name="Morin N."/>
            <person name="Michaux A."/>
            <person name="Benotmane M.A."/>
            <person name="Leys N."/>
            <person name="Vallaeys T."/>
            <person name="Lapidus A."/>
            <person name="Monchy S."/>
            <person name="Medigue C."/>
            <person name="Taghavi S."/>
            <person name="McCorkle S."/>
            <person name="Dunn J."/>
            <person name="van der Lelie D."/>
            <person name="Mergeay M."/>
        </authorList>
    </citation>
    <scope>NUCLEOTIDE SEQUENCE [LARGE SCALE GENOMIC DNA]</scope>
    <source>
        <strain>ATCC 43123 / DSM 2839 / NBRC 102507 / CH34</strain>
    </source>
</reference>
<protein>
    <recommendedName>
        <fullName evidence="1">Ribosomal RNA small subunit methyltransferase A</fullName>
        <ecNumber evidence="1">2.1.1.182</ecNumber>
    </recommendedName>
    <alternativeName>
        <fullName evidence="1">16S rRNA (adenine(1518)-N(6)/adenine(1519)-N(6))-dimethyltransferase</fullName>
    </alternativeName>
    <alternativeName>
        <fullName evidence="1">16S rRNA dimethyladenosine transferase</fullName>
    </alternativeName>
    <alternativeName>
        <fullName evidence="1">16S rRNA dimethylase</fullName>
    </alternativeName>
    <alternativeName>
        <fullName evidence="1">S-adenosylmethionine-6-N', N'-adenosyl(rRNA) dimethyltransferase</fullName>
    </alternativeName>
</protein>
<name>RSMA_CUPMC</name>